<organism>
    <name type="scientific">Shigella sonnei (strain Ss046)</name>
    <dbReference type="NCBI Taxonomy" id="300269"/>
    <lineage>
        <taxon>Bacteria</taxon>
        <taxon>Pseudomonadati</taxon>
        <taxon>Pseudomonadota</taxon>
        <taxon>Gammaproteobacteria</taxon>
        <taxon>Enterobacterales</taxon>
        <taxon>Enterobacteriaceae</taxon>
        <taxon>Shigella</taxon>
    </lineage>
</organism>
<name>METE_SHISS</name>
<comment type="function">
    <text evidence="1">Catalyzes the transfer of a methyl group from 5-methyltetrahydrofolate to homocysteine resulting in methionine formation.</text>
</comment>
<comment type="catalytic activity">
    <reaction evidence="1">
        <text>5-methyltetrahydropteroyltri-L-glutamate + L-homocysteine = tetrahydropteroyltri-L-glutamate + L-methionine</text>
        <dbReference type="Rhea" id="RHEA:21196"/>
        <dbReference type="ChEBI" id="CHEBI:57844"/>
        <dbReference type="ChEBI" id="CHEBI:58140"/>
        <dbReference type="ChEBI" id="CHEBI:58199"/>
        <dbReference type="ChEBI" id="CHEBI:58207"/>
        <dbReference type="EC" id="2.1.1.14"/>
    </reaction>
</comment>
<comment type="cofactor">
    <cofactor evidence="1">
        <name>Zn(2+)</name>
        <dbReference type="ChEBI" id="CHEBI:29105"/>
    </cofactor>
    <text evidence="1">Binds 1 zinc ion per subunit.</text>
</comment>
<comment type="pathway">
    <text evidence="1">Amino-acid biosynthesis; L-methionine biosynthesis via de novo pathway; L-methionine from L-homocysteine (MetE route): step 1/1.</text>
</comment>
<comment type="similarity">
    <text evidence="1">Belongs to the vitamin-B12 independent methionine synthase family.</text>
</comment>
<feature type="chain" id="PRO_1000017275" description="5-methyltetrahydropteroyltriglutamate--homocysteine methyltransferase">
    <location>
        <begin position="1"/>
        <end position="753"/>
    </location>
</feature>
<feature type="active site" description="Proton donor" evidence="1">
    <location>
        <position position="694"/>
    </location>
</feature>
<feature type="binding site" evidence="1">
    <location>
        <begin position="17"/>
        <end position="20"/>
    </location>
    <ligand>
        <name>5-methyltetrahydropteroyltri-L-glutamate</name>
        <dbReference type="ChEBI" id="CHEBI:58207"/>
    </ligand>
</feature>
<feature type="binding site" evidence="1">
    <location>
        <position position="117"/>
    </location>
    <ligand>
        <name>5-methyltetrahydropteroyltri-L-glutamate</name>
        <dbReference type="ChEBI" id="CHEBI:58207"/>
    </ligand>
</feature>
<feature type="binding site" evidence="1">
    <location>
        <begin position="431"/>
        <end position="433"/>
    </location>
    <ligand>
        <name>L-homocysteine</name>
        <dbReference type="ChEBI" id="CHEBI:58199"/>
    </ligand>
</feature>
<feature type="binding site" evidence="1">
    <location>
        <begin position="431"/>
        <end position="433"/>
    </location>
    <ligand>
        <name>L-methionine</name>
        <dbReference type="ChEBI" id="CHEBI:57844"/>
    </ligand>
</feature>
<feature type="binding site" evidence="1">
    <location>
        <position position="484"/>
    </location>
    <ligand>
        <name>L-homocysteine</name>
        <dbReference type="ChEBI" id="CHEBI:58199"/>
    </ligand>
</feature>
<feature type="binding site" evidence="1">
    <location>
        <position position="484"/>
    </location>
    <ligand>
        <name>L-methionine</name>
        <dbReference type="ChEBI" id="CHEBI:57844"/>
    </ligand>
</feature>
<feature type="binding site" evidence="1">
    <location>
        <begin position="515"/>
        <end position="516"/>
    </location>
    <ligand>
        <name>5-methyltetrahydropteroyltri-L-glutamate</name>
        <dbReference type="ChEBI" id="CHEBI:58207"/>
    </ligand>
</feature>
<feature type="binding site" evidence="1">
    <location>
        <position position="561"/>
    </location>
    <ligand>
        <name>5-methyltetrahydropteroyltri-L-glutamate</name>
        <dbReference type="ChEBI" id="CHEBI:58207"/>
    </ligand>
</feature>
<feature type="binding site" evidence="1">
    <location>
        <position position="599"/>
    </location>
    <ligand>
        <name>L-homocysteine</name>
        <dbReference type="ChEBI" id="CHEBI:58199"/>
    </ligand>
</feature>
<feature type="binding site" evidence="1">
    <location>
        <position position="599"/>
    </location>
    <ligand>
        <name>L-methionine</name>
        <dbReference type="ChEBI" id="CHEBI:57844"/>
    </ligand>
</feature>
<feature type="binding site" evidence="1">
    <location>
        <position position="605"/>
    </location>
    <ligand>
        <name>5-methyltetrahydropteroyltri-L-glutamate</name>
        <dbReference type="ChEBI" id="CHEBI:58207"/>
    </ligand>
</feature>
<feature type="binding site" evidence="1">
    <location>
        <position position="641"/>
    </location>
    <ligand>
        <name>Zn(2+)</name>
        <dbReference type="ChEBI" id="CHEBI:29105"/>
        <note>catalytic</note>
    </ligand>
</feature>
<feature type="binding site" evidence="1">
    <location>
        <position position="643"/>
    </location>
    <ligand>
        <name>Zn(2+)</name>
        <dbReference type="ChEBI" id="CHEBI:29105"/>
        <note>catalytic</note>
    </ligand>
</feature>
<feature type="binding site" evidence="1">
    <location>
        <position position="665"/>
    </location>
    <ligand>
        <name>Zn(2+)</name>
        <dbReference type="ChEBI" id="CHEBI:29105"/>
        <note>catalytic</note>
    </ligand>
</feature>
<feature type="binding site" evidence="1">
    <location>
        <position position="726"/>
    </location>
    <ligand>
        <name>Zn(2+)</name>
        <dbReference type="ChEBI" id="CHEBI:29105"/>
        <note>catalytic</note>
    </ligand>
</feature>
<gene>
    <name evidence="1" type="primary">metE</name>
    <name type="ordered locus">SSON_4003</name>
</gene>
<reference key="1">
    <citation type="journal article" date="2005" name="Nucleic Acids Res.">
        <title>Genome dynamics and diversity of Shigella species, the etiologic agents of bacillary dysentery.</title>
        <authorList>
            <person name="Yang F."/>
            <person name="Yang J."/>
            <person name="Zhang X."/>
            <person name="Chen L."/>
            <person name="Jiang Y."/>
            <person name="Yan Y."/>
            <person name="Tang X."/>
            <person name="Wang J."/>
            <person name="Xiong Z."/>
            <person name="Dong J."/>
            <person name="Xue Y."/>
            <person name="Zhu Y."/>
            <person name="Xu X."/>
            <person name="Sun L."/>
            <person name="Chen S."/>
            <person name="Nie H."/>
            <person name="Peng J."/>
            <person name="Xu J."/>
            <person name="Wang Y."/>
            <person name="Yuan Z."/>
            <person name="Wen Y."/>
            <person name="Yao Z."/>
            <person name="Shen Y."/>
            <person name="Qiang B."/>
            <person name="Hou Y."/>
            <person name="Yu J."/>
            <person name="Jin Q."/>
        </authorList>
    </citation>
    <scope>NUCLEOTIDE SEQUENCE [LARGE SCALE GENOMIC DNA]</scope>
    <source>
        <strain>Ss046</strain>
    </source>
</reference>
<accession>Q3YVD7</accession>
<evidence type="ECO:0000255" key="1">
    <source>
        <dbReference type="HAMAP-Rule" id="MF_00172"/>
    </source>
</evidence>
<protein>
    <recommendedName>
        <fullName evidence="1">5-methyltetrahydropteroyltriglutamate--homocysteine methyltransferase</fullName>
        <ecNumber evidence="1">2.1.1.14</ecNumber>
    </recommendedName>
    <alternativeName>
        <fullName evidence="1">Cobalamin-independent methionine synthase</fullName>
    </alternativeName>
    <alternativeName>
        <fullName evidence="1">Methionine synthase, vitamin-B12 independent isozyme</fullName>
    </alternativeName>
</protein>
<dbReference type="EC" id="2.1.1.14" evidence="1"/>
<dbReference type="EMBL" id="CP000038">
    <property type="protein sequence ID" value="AAZ90525.1"/>
    <property type="molecule type" value="Genomic_DNA"/>
</dbReference>
<dbReference type="RefSeq" id="WP_000153974.1">
    <property type="nucleotide sequence ID" value="NC_007384.1"/>
</dbReference>
<dbReference type="SMR" id="Q3YVD7"/>
<dbReference type="GeneID" id="93778108"/>
<dbReference type="KEGG" id="ssn:SSON_4003"/>
<dbReference type="HOGENOM" id="CLU_013175_0_0_6"/>
<dbReference type="UniPathway" id="UPA00051">
    <property type="reaction ID" value="UER00082"/>
</dbReference>
<dbReference type="Proteomes" id="UP000002529">
    <property type="component" value="Chromosome"/>
</dbReference>
<dbReference type="GO" id="GO:0003871">
    <property type="term" value="F:5-methyltetrahydropteroyltriglutamate-homocysteine S-methyltransferase activity"/>
    <property type="evidence" value="ECO:0007669"/>
    <property type="project" value="UniProtKB-UniRule"/>
</dbReference>
<dbReference type="GO" id="GO:0008270">
    <property type="term" value="F:zinc ion binding"/>
    <property type="evidence" value="ECO:0007669"/>
    <property type="project" value="InterPro"/>
</dbReference>
<dbReference type="GO" id="GO:0009086">
    <property type="term" value="P:methionine biosynthetic process"/>
    <property type="evidence" value="ECO:0007669"/>
    <property type="project" value="UniProtKB-UniRule"/>
</dbReference>
<dbReference type="GO" id="GO:0032259">
    <property type="term" value="P:methylation"/>
    <property type="evidence" value="ECO:0007669"/>
    <property type="project" value="UniProtKB-KW"/>
</dbReference>
<dbReference type="CDD" id="cd03311">
    <property type="entry name" value="CIMS_C_terminal_like"/>
    <property type="match status" value="1"/>
</dbReference>
<dbReference type="CDD" id="cd03312">
    <property type="entry name" value="CIMS_N_terminal_like"/>
    <property type="match status" value="1"/>
</dbReference>
<dbReference type="FunFam" id="3.20.20.210:FF:000002">
    <property type="entry name" value="5-methyltetrahydropteroyltriglutamate--homocysteine methyltransferase"/>
    <property type="match status" value="1"/>
</dbReference>
<dbReference type="FunFam" id="3.20.20.210:FF:000003">
    <property type="entry name" value="5-methyltetrahydropteroyltriglutamate--homocysteine methyltransferase"/>
    <property type="match status" value="1"/>
</dbReference>
<dbReference type="Gene3D" id="3.20.20.210">
    <property type="match status" value="2"/>
</dbReference>
<dbReference type="HAMAP" id="MF_00172">
    <property type="entry name" value="Meth_synth"/>
    <property type="match status" value="1"/>
</dbReference>
<dbReference type="InterPro" id="IPR013215">
    <property type="entry name" value="Cbl-indep_Met_Synth_N"/>
</dbReference>
<dbReference type="InterPro" id="IPR006276">
    <property type="entry name" value="Cobalamin-indep_Met_synthase"/>
</dbReference>
<dbReference type="InterPro" id="IPR002629">
    <property type="entry name" value="Met_Synth_C/arc"/>
</dbReference>
<dbReference type="InterPro" id="IPR038071">
    <property type="entry name" value="UROD/MetE-like_sf"/>
</dbReference>
<dbReference type="NCBIfam" id="TIGR01371">
    <property type="entry name" value="met_syn_B12ind"/>
    <property type="match status" value="1"/>
</dbReference>
<dbReference type="NCBIfam" id="NF003556">
    <property type="entry name" value="PRK05222.1"/>
    <property type="match status" value="1"/>
</dbReference>
<dbReference type="PANTHER" id="PTHR30519">
    <property type="entry name" value="5-METHYLTETRAHYDROPTEROYLTRIGLUTAMATE--HOMOCYSTEINE METHYLTRANSFERASE"/>
    <property type="match status" value="1"/>
</dbReference>
<dbReference type="Pfam" id="PF08267">
    <property type="entry name" value="Meth_synt_1"/>
    <property type="match status" value="1"/>
</dbReference>
<dbReference type="Pfam" id="PF01717">
    <property type="entry name" value="Meth_synt_2"/>
    <property type="match status" value="1"/>
</dbReference>
<dbReference type="PIRSF" id="PIRSF000382">
    <property type="entry name" value="MeTrfase_B12_ind"/>
    <property type="match status" value="1"/>
</dbReference>
<dbReference type="SUPFAM" id="SSF51726">
    <property type="entry name" value="UROD/MetE-like"/>
    <property type="match status" value="2"/>
</dbReference>
<sequence length="753" mass="84721">MTILNHTLGFPRVGLRRELKKAQESYWAGNSTREELLTVGRELRARHWDQQKQAGIDLLPVGDFAWYDHVLTTSLLLGNVPPRHQNKDGSVDIDTLFRIGRGRAPTGEPAAAAEMTKWFNTNYHYMVPEFVKGQQFKLTWTQLLEEVDEALALGHNVKPVLLGPVTYLWLGKVKGEQFDRLSLLNDILPVYQQVLAELAKRGIEWVQIDEPALVLELPQAWLDAYKPAYDALQGQVKLLLTTYFEGVTPNLDTITALPVQGLHVDLVHGKDDVAELHKRLPSDWLLSAGLINGRNVWRADLTEKYAQIKDIVGKRDLWVASSCSLLHSPIDLSVETRLDAEVKSWFAFALQKCHELALLRDALNSGDTAALAEWSAPIQARRHSTRVHNPAVEKRLAAITAQDSQRANVYEVRAEAQRARFKLPAWPTTTIGSFPQTTEIRTLRLDFKKGNLDANNYRTGIAEHIRQAIVEQERLGLDVLVHGEAERNDMVEYFGEHLDGFVFTQNGWVQSYGSRCVKPPIVIGDVSRPAPITVEWAKYAQSLTDKPVKGMLTGPVTILCWSFPREDVSRETIAKQIALALRDEVADLEAAGIGIIQIDEPALREGLPLRRSDWDAYLQWGVEAFRINAAVAKDDTQIHTHMCYCEFNDIMDSIAALDADVITIETSRSDMELLESFEEFDYPNEIGPGVYDIHSPNVPSVEWIEALLKKAAKRIPAERLWVNPDCGLKTRGWPETRAALANMVQAAQNLRRG</sequence>
<proteinExistence type="inferred from homology"/>
<keyword id="KW-0028">Amino-acid biosynthesis</keyword>
<keyword id="KW-0479">Metal-binding</keyword>
<keyword id="KW-0486">Methionine biosynthesis</keyword>
<keyword id="KW-0489">Methyltransferase</keyword>
<keyword id="KW-1185">Reference proteome</keyword>
<keyword id="KW-0677">Repeat</keyword>
<keyword id="KW-0808">Transferase</keyword>
<keyword id="KW-0862">Zinc</keyword>